<proteinExistence type="predicted"/>
<keyword id="KW-1185">Reference proteome</keyword>
<reference key="1">
    <citation type="journal article" date="1997" name="Virology">
        <title>The sequence of the Orgyia pseudotsugata multinucleocapsid nuclear polyhedrosis virus genome.</title>
        <authorList>
            <person name="Ahrens C.H."/>
            <person name="Russell R.R."/>
            <person name="Funk C.J."/>
            <person name="Evans J."/>
            <person name="Harwood S."/>
            <person name="Rohrmann G.F."/>
        </authorList>
    </citation>
    <scope>NUCLEOTIDE SEQUENCE [LARGE SCALE GENOMIC DNA]</scope>
</reference>
<dbReference type="EMBL" id="U75930">
    <property type="protein sequence ID" value="AAC59113.1"/>
    <property type="molecule type" value="Genomic_DNA"/>
</dbReference>
<dbReference type="RefSeq" id="NP_046270.1">
    <property type="nucleotide sequence ID" value="NC_001875.2"/>
</dbReference>
<dbReference type="KEGG" id="vg:911969"/>
<dbReference type="OrthoDB" id="5027at10239"/>
<dbReference type="Proteomes" id="UP000009248">
    <property type="component" value="Genome"/>
</dbReference>
<accession>O10353</accession>
<sequence length="424" mass="48220">MATPVSYSFVQRMVVNELEFLNANVNSNGVGYFSFNHLGDRLQSLLTTLNNVAANADPYLQKCDARSLKLLLDNLNKISFTHNVESKPQLKQRLLDMLPNGDAIGNKYDKELNKILNFTYNCRLDTLNNIEMTHMKLTCVLCYTAGLPFRDNLWYLPNNESGELFATAFGNYLAYFLAMMRSKDGSLDKNVRVMYHVVPPLQLSEPPYIVFRDRINAGLISVQDSAQYQTAGLDFEVCYTLNNKLYLNSPGSQQTELCAEYLELNALPYCLYNATLPDNFALSALNLYKLNDAKKKLKLGNVLFVNTMRTGAKETIIATMRAYYYACKYAKANKLLRVIGNYKGYANDYKLAALDFAILMLVTNSTNIQLKYLTMNVHERMFMELKQQVCRLSPRKIYNVLLNYDIGSEPLTNFSRDAADGAFD</sequence>
<protein>
    <recommendedName>
        <fullName>Uncharacterized 48.2 kDa protein</fullName>
    </recommendedName>
</protein>
<organismHost>
    <name type="scientific">Orgyia pseudotsugata</name>
    <name type="common">Douglas-fir tussock moth</name>
    <dbReference type="NCBI Taxonomy" id="33414"/>
</organismHost>
<gene>
    <name type="ORF">ORF114</name>
</gene>
<feature type="chain" id="PRO_0000133052" description="Uncharacterized 48.2 kDa protein">
    <location>
        <begin position="1"/>
        <end position="424"/>
    </location>
</feature>
<name>Y114_NPVOP</name>
<organism>
    <name type="scientific">Orgyia pseudotsugata multicapsid polyhedrosis virus</name>
    <name type="common">OpMNPV</name>
    <dbReference type="NCBI Taxonomy" id="262177"/>
    <lineage>
        <taxon>Viruses</taxon>
        <taxon>Viruses incertae sedis</taxon>
        <taxon>Naldaviricetes</taxon>
        <taxon>Lefavirales</taxon>
        <taxon>Baculoviridae</taxon>
        <taxon>Alphabaculovirus</taxon>
        <taxon>Alphabaculovirus orpseudotsugatae</taxon>
    </lineage>
</organism>